<keyword id="KW-0963">Cytoplasm</keyword>
<keyword id="KW-0326">Glycosidase</keyword>
<keyword id="KW-0378">Hydrolase</keyword>
<accession>B5RGS3</accession>
<feature type="chain" id="PRO_1000136411" description="Cytoplasmic trehalase">
    <location>
        <begin position="1"/>
        <end position="549"/>
    </location>
</feature>
<feature type="active site" description="Proton donor/acceptor" evidence="1">
    <location>
        <position position="326"/>
    </location>
</feature>
<feature type="active site" description="Proton donor/acceptor" evidence="1">
    <location>
        <position position="509"/>
    </location>
</feature>
<feature type="binding site" evidence="1">
    <location>
        <position position="168"/>
    </location>
    <ligand>
        <name>substrate</name>
    </ligand>
</feature>
<feature type="binding site" evidence="1">
    <location>
        <begin position="175"/>
        <end position="176"/>
    </location>
    <ligand>
        <name>substrate</name>
    </ligand>
</feature>
<feature type="binding site" evidence="1">
    <location>
        <position position="212"/>
    </location>
    <ligand>
        <name>substrate</name>
    </ligand>
</feature>
<feature type="binding site" evidence="1">
    <location>
        <begin position="221"/>
        <end position="223"/>
    </location>
    <ligand>
        <name>substrate</name>
    </ligand>
</feature>
<feature type="binding site" evidence="1">
    <location>
        <begin position="292"/>
        <end position="294"/>
    </location>
    <ligand>
        <name>substrate</name>
    </ligand>
</feature>
<feature type="binding site" evidence="1">
    <location>
        <position position="324"/>
    </location>
    <ligand>
        <name>substrate</name>
    </ligand>
</feature>
<feature type="binding site" evidence="1">
    <location>
        <position position="525"/>
    </location>
    <ligand>
        <name>substrate</name>
    </ligand>
</feature>
<reference key="1">
    <citation type="journal article" date="2008" name="Genome Res.">
        <title>Comparative genome analysis of Salmonella enteritidis PT4 and Salmonella gallinarum 287/91 provides insights into evolutionary and host adaptation pathways.</title>
        <authorList>
            <person name="Thomson N.R."/>
            <person name="Clayton D.J."/>
            <person name="Windhorst D."/>
            <person name="Vernikos G."/>
            <person name="Davidson S."/>
            <person name="Churcher C."/>
            <person name="Quail M.A."/>
            <person name="Stevens M."/>
            <person name="Jones M.A."/>
            <person name="Watson M."/>
            <person name="Barron A."/>
            <person name="Layton A."/>
            <person name="Pickard D."/>
            <person name="Kingsley R.A."/>
            <person name="Bignell A."/>
            <person name="Clark L."/>
            <person name="Harris B."/>
            <person name="Ormond D."/>
            <person name="Abdellah Z."/>
            <person name="Brooks K."/>
            <person name="Cherevach I."/>
            <person name="Chillingworth T."/>
            <person name="Woodward J."/>
            <person name="Norberczak H."/>
            <person name="Lord A."/>
            <person name="Arrowsmith C."/>
            <person name="Jagels K."/>
            <person name="Moule S."/>
            <person name="Mungall K."/>
            <person name="Saunders M."/>
            <person name="Whitehead S."/>
            <person name="Chabalgoity J.A."/>
            <person name="Maskell D."/>
            <person name="Humphreys T."/>
            <person name="Roberts M."/>
            <person name="Barrow P.A."/>
            <person name="Dougan G."/>
            <person name="Parkhill J."/>
        </authorList>
    </citation>
    <scope>NUCLEOTIDE SEQUENCE [LARGE SCALE GENOMIC DNA]</scope>
    <source>
        <strain>287/91 / NCTC 13346</strain>
    </source>
</reference>
<protein>
    <recommendedName>
        <fullName evidence="1">Cytoplasmic trehalase</fullName>
        <ecNumber evidence="1">3.2.1.28</ecNumber>
    </recommendedName>
    <alternativeName>
        <fullName evidence="1">Alpha,alpha-trehalase</fullName>
    </alternativeName>
    <alternativeName>
        <fullName evidence="1">Alpha,alpha-trehalose glucohydrolase</fullName>
    </alternativeName>
</protein>
<gene>
    <name evidence="1" type="primary">treF</name>
    <name type="ordered locus">SG3834</name>
</gene>
<name>TREF_SALG2</name>
<dbReference type="EC" id="3.2.1.28" evidence="1"/>
<dbReference type="EMBL" id="AM933173">
    <property type="protein sequence ID" value="CAR39610.1"/>
    <property type="molecule type" value="Genomic_DNA"/>
</dbReference>
<dbReference type="RefSeq" id="WP_000934257.1">
    <property type="nucleotide sequence ID" value="NC_011274.1"/>
</dbReference>
<dbReference type="SMR" id="B5RGS3"/>
<dbReference type="CAZy" id="GH37">
    <property type="family name" value="Glycoside Hydrolase Family 37"/>
</dbReference>
<dbReference type="KEGG" id="seg:SG3834"/>
<dbReference type="HOGENOM" id="CLU_006451_3_1_6"/>
<dbReference type="UniPathway" id="UPA00300">
    <property type="reaction ID" value="UER00535"/>
</dbReference>
<dbReference type="Proteomes" id="UP000008321">
    <property type="component" value="Chromosome"/>
</dbReference>
<dbReference type="GO" id="GO:0005737">
    <property type="term" value="C:cytoplasm"/>
    <property type="evidence" value="ECO:0007669"/>
    <property type="project" value="UniProtKB-SubCell"/>
</dbReference>
<dbReference type="GO" id="GO:0004555">
    <property type="term" value="F:alpha,alpha-trehalase activity"/>
    <property type="evidence" value="ECO:0007669"/>
    <property type="project" value="UniProtKB-UniRule"/>
</dbReference>
<dbReference type="GO" id="GO:0071474">
    <property type="term" value="P:cellular hyperosmotic response"/>
    <property type="evidence" value="ECO:0007669"/>
    <property type="project" value="InterPro"/>
</dbReference>
<dbReference type="GO" id="GO:0005993">
    <property type="term" value="P:trehalose catabolic process"/>
    <property type="evidence" value="ECO:0007669"/>
    <property type="project" value="UniProtKB-UniRule"/>
</dbReference>
<dbReference type="FunFam" id="1.50.10.10:FF:000003">
    <property type="entry name" value="Cytoplasmic trehalase"/>
    <property type="match status" value="1"/>
</dbReference>
<dbReference type="Gene3D" id="1.50.10.10">
    <property type="match status" value="1"/>
</dbReference>
<dbReference type="HAMAP" id="MF_01059">
    <property type="entry name" value="Cyt_trehalase"/>
    <property type="match status" value="1"/>
</dbReference>
<dbReference type="InterPro" id="IPR008928">
    <property type="entry name" value="6-hairpin_glycosidase_sf"/>
</dbReference>
<dbReference type="InterPro" id="IPR012341">
    <property type="entry name" value="6hp_glycosidase-like_sf"/>
</dbReference>
<dbReference type="InterPro" id="IPR023715">
    <property type="entry name" value="Cyt_trehalase"/>
</dbReference>
<dbReference type="InterPro" id="IPR001661">
    <property type="entry name" value="Glyco_hydro_37"/>
</dbReference>
<dbReference type="InterPro" id="IPR018232">
    <property type="entry name" value="Glyco_hydro_37_CS"/>
</dbReference>
<dbReference type="NCBIfam" id="NF009773">
    <property type="entry name" value="PRK13270.1"/>
    <property type="match status" value="1"/>
</dbReference>
<dbReference type="NCBIfam" id="NF009774">
    <property type="entry name" value="PRK13271.1"/>
    <property type="match status" value="1"/>
</dbReference>
<dbReference type="PANTHER" id="PTHR23403:SF8">
    <property type="entry name" value="CYTOPLASMIC TREHALASE"/>
    <property type="match status" value="1"/>
</dbReference>
<dbReference type="PANTHER" id="PTHR23403">
    <property type="entry name" value="TREHALASE"/>
    <property type="match status" value="1"/>
</dbReference>
<dbReference type="Pfam" id="PF01204">
    <property type="entry name" value="Trehalase"/>
    <property type="match status" value="1"/>
</dbReference>
<dbReference type="PRINTS" id="PR00744">
    <property type="entry name" value="GLHYDRLASE37"/>
</dbReference>
<dbReference type="SUPFAM" id="SSF48208">
    <property type="entry name" value="Six-hairpin glycosidases"/>
    <property type="match status" value="1"/>
</dbReference>
<dbReference type="PROSITE" id="PS00927">
    <property type="entry name" value="TREHALASE_1"/>
    <property type="match status" value="1"/>
</dbReference>
<dbReference type="PROSITE" id="PS00928">
    <property type="entry name" value="TREHALASE_2"/>
    <property type="match status" value="1"/>
</dbReference>
<sequence length="549" mass="63644">MLNQKLNPTPSEDLTIDVDLLYETDPCELKLDEMIEAEPEPEMIEGLPASDALTPADRYLELFEHVQSTKLFPDSKTFPDCAPKMDPLDILIRYRKVRRHRDFDLRRFVENHFWLPETLSSEYVSNPENSLKEHIDQLWPILTREPQDHIPWSSLLALPQSYIVPGGRFSETYYWDSYFTMLGLAESGREDLLKCMADNFAWMIENYGHIPNGNRTYYLSRSQPPVFALMVELFEEDGVRGARRYLDHLKMEYAFWMDGAESLALNQAYRHVVRMPDGSLLNRYWDDRDTPRDESWLEDVETAKHSGRPPNEVYRDLRAGAASGWDYSSRWLRDAGRLASIRTTQFIPIDLNAFLYKLESAIANISALKGERDTEALFRQKASDRRAAVNHYLWDDENGCYRDYDWRREEMALFSAASIVPLYVGMANHEQADRLANVVRSRLLTPGGIMATEYETGEQWDKPNGWAPLQWMAIQGFKRYGDDMLGDEIAHNWLKTVNHFYQEHHKLIEKYHISGGTPREGGGGEYPLQDGFGWTNGVVRRLIGLYGEP</sequence>
<proteinExistence type="inferred from homology"/>
<organism>
    <name type="scientific">Salmonella gallinarum (strain 287/91 / NCTC 13346)</name>
    <dbReference type="NCBI Taxonomy" id="550538"/>
    <lineage>
        <taxon>Bacteria</taxon>
        <taxon>Pseudomonadati</taxon>
        <taxon>Pseudomonadota</taxon>
        <taxon>Gammaproteobacteria</taxon>
        <taxon>Enterobacterales</taxon>
        <taxon>Enterobacteriaceae</taxon>
        <taxon>Salmonella</taxon>
    </lineage>
</organism>
<comment type="function">
    <text evidence="1">Hydrolyzes trehalose to glucose. Could be involved, in cells returning to low osmolarity conditions, in the utilization of the accumulated cytoplasmic trehalose, which was synthesized in response to high osmolarity.</text>
</comment>
<comment type="catalytic activity">
    <reaction evidence="1">
        <text>alpha,alpha-trehalose + H2O = alpha-D-glucose + beta-D-glucose</text>
        <dbReference type="Rhea" id="RHEA:32675"/>
        <dbReference type="ChEBI" id="CHEBI:15377"/>
        <dbReference type="ChEBI" id="CHEBI:15903"/>
        <dbReference type="ChEBI" id="CHEBI:16551"/>
        <dbReference type="ChEBI" id="CHEBI:17925"/>
        <dbReference type="EC" id="3.2.1.28"/>
    </reaction>
</comment>
<comment type="pathway">
    <text evidence="1">Glycan degradation; trehalose degradation; D-glucose from alpha,alpha-trehalose: step 1/1.</text>
</comment>
<comment type="subunit">
    <text evidence="1">Monomer.</text>
</comment>
<comment type="subcellular location">
    <subcellularLocation>
        <location evidence="1">Cytoplasm</location>
    </subcellularLocation>
</comment>
<comment type="similarity">
    <text evidence="1">Belongs to the glycosyl hydrolase 37 family.</text>
</comment>
<evidence type="ECO:0000255" key="1">
    <source>
        <dbReference type="HAMAP-Rule" id="MF_01059"/>
    </source>
</evidence>